<dbReference type="EC" id="6.3.1.5" evidence="1"/>
<dbReference type="EMBL" id="CP000387">
    <property type="protein sequence ID" value="ABN45244.1"/>
    <property type="molecule type" value="Genomic_DNA"/>
</dbReference>
<dbReference type="RefSeq" id="WP_011837416.1">
    <property type="nucleotide sequence ID" value="NC_009009.1"/>
</dbReference>
<dbReference type="RefSeq" id="YP_001035794.1">
    <property type="nucleotide sequence ID" value="NC_009009.1"/>
</dbReference>
<dbReference type="SMR" id="A3CPY9"/>
<dbReference type="STRING" id="388919.SSA_1863"/>
<dbReference type="KEGG" id="ssa:SSA_1863"/>
<dbReference type="PATRIC" id="fig|388919.9.peg.1768"/>
<dbReference type="eggNOG" id="COG0171">
    <property type="taxonomic scope" value="Bacteria"/>
</dbReference>
<dbReference type="HOGENOM" id="CLU_059327_3_0_9"/>
<dbReference type="OrthoDB" id="9803818at2"/>
<dbReference type="UniPathway" id="UPA00253">
    <property type="reaction ID" value="UER00333"/>
</dbReference>
<dbReference type="Proteomes" id="UP000002148">
    <property type="component" value="Chromosome"/>
</dbReference>
<dbReference type="GO" id="GO:0005737">
    <property type="term" value="C:cytoplasm"/>
    <property type="evidence" value="ECO:0007669"/>
    <property type="project" value="InterPro"/>
</dbReference>
<dbReference type="GO" id="GO:0005524">
    <property type="term" value="F:ATP binding"/>
    <property type="evidence" value="ECO:0007669"/>
    <property type="project" value="UniProtKB-UniRule"/>
</dbReference>
<dbReference type="GO" id="GO:0004359">
    <property type="term" value="F:glutaminase activity"/>
    <property type="evidence" value="ECO:0007669"/>
    <property type="project" value="InterPro"/>
</dbReference>
<dbReference type="GO" id="GO:0046872">
    <property type="term" value="F:metal ion binding"/>
    <property type="evidence" value="ECO:0007669"/>
    <property type="project" value="UniProtKB-KW"/>
</dbReference>
<dbReference type="GO" id="GO:0003952">
    <property type="term" value="F:NAD+ synthase (glutamine-hydrolyzing) activity"/>
    <property type="evidence" value="ECO:0007669"/>
    <property type="project" value="InterPro"/>
</dbReference>
<dbReference type="GO" id="GO:0008795">
    <property type="term" value="F:NAD+ synthase activity"/>
    <property type="evidence" value="ECO:0007669"/>
    <property type="project" value="UniProtKB-UniRule"/>
</dbReference>
<dbReference type="GO" id="GO:0009435">
    <property type="term" value="P:NAD biosynthetic process"/>
    <property type="evidence" value="ECO:0007669"/>
    <property type="project" value="UniProtKB-UniRule"/>
</dbReference>
<dbReference type="CDD" id="cd00553">
    <property type="entry name" value="NAD_synthase"/>
    <property type="match status" value="1"/>
</dbReference>
<dbReference type="FunFam" id="3.40.50.620:FF:000015">
    <property type="entry name" value="NH(3)-dependent NAD(+) synthetase"/>
    <property type="match status" value="1"/>
</dbReference>
<dbReference type="Gene3D" id="3.40.50.620">
    <property type="entry name" value="HUPs"/>
    <property type="match status" value="1"/>
</dbReference>
<dbReference type="HAMAP" id="MF_00193">
    <property type="entry name" value="NadE_ammonia_dep"/>
    <property type="match status" value="1"/>
</dbReference>
<dbReference type="InterPro" id="IPR022310">
    <property type="entry name" value="NAD/GMP_synthase"/>
</dbReference>
<dbReference type="InterPro" id="IPR003694">
    <property type="entry name" value="NAD_synthase"/>
</dbReference>
<dbReference type="InterPro" id="IPR022926">
    <property type="entry name" value="NH(3)-dep_NAD(+)_synth"/>
</dbReference>
<dbReference type="InterPro" id="IPR014729">
    <property type="entry name" value="Rossmann-like_a/b/a_fold"/>
</dbReference>
<dbReference type="NCBIfam" id="TIGR00552">
    <property type="entry name" value="nadE"/>
    <property type="match status" value="1"/>
</dbReference>
<dbReference type="NCBIfam" id="NF001979">
    <property type="entry name" value="PRK00768.1"/>
    <property type="match status" value="1"/>
</dbReference>
<dbReference type="PANTHER" id="PTHR23090">
    <property type="entry name" value="NH 3 /GLUTAMINE-DEPENDENT NAD + SYNTHETASE"/>
    <property type="match status" value="1"/>
</dbReference>
<dbReference type="PANTHER" id="PTHR23090:SF7">
    <property type="entry name" value="NH(3)-DEPENDENT NAD(+) SYNTHETASE"/>
    <property type="match status" value="1"/>
</dbReference>
<dbReference type="Pfam" id="PF02540">
    <property type="entry name" value="NAD_synthase"/>
    <property type="match status" value="1"/>
</dbReference>
<dbReference type="SUPFAM" id="SSF52402">
    <property type="entry name" value="Adenine nucleotide alpha hydrolases-like"/>
    <property type="match status" value="1"/>
</dbReference>
<keyword id="KW-0067">ATP-binding</keyword>
<keyword id="KW-0436">Ligase</keyword>
<keyword id="KW-0460">Magnesium</keyword>
<keyword id="KW-0479">Metal-binding</keyword>
<keyword id="KW-0520">NAD</keyword>
<keyword id="KW-0547">Nucleotide-binding</keyword>
<keyword id="KW-1185">Reference proteome</keyword>
<proteinExistence type="inferred from homology"/>
<accession>A3CPY9</accession>
<evidence type="ECO:0000255" key="1">
    <source>
        <dbReference type="HAMAP-Rule" id="MF_00193"/>
    </source>
</evidence>
<gene>
    <name evidence="1" type="primary">nadE</name>
    <name type="ordered locus">SSA_1863</name>
</gene>
<organism>
    <name type="scientific">Streptococcus sanguinis (strain SK36)</name>
    <dbReference type="NCBI Taxonomy" id="388919"/>
    <lineage>
        <taxon>Bacteria</taxon>
        <taxon>Bacillati</taxon>
        <taxon>Bacillota</taxon>
        <taxon>Bacilli</taxon>
        <taxon>Lactobacillales</taxon>
        <taxon>Streptococcaceae</taxon>
        <taxon>Streptococcus</taxon>
    </lineage>
</organism>
<reference key="1">
    <citation type="journal article" date="2007" name="J. Bacteriol.">
        <title>Genome of the opportunistic pathogen Streptococcus sanguinis.</title>
        <authorList>
            <person name="Xu P."/>
            <person name="Alves J.M."/>
            <person name="Kitten T."/>
            <person name="Brown A."/>
            <person name="Chen Z."/>
            <person name="Ozaki L.S."/>
            <person name="Manque P."/>
            <person name="Ge X."/>
            <person name="Serrano M.G."/>
            <person name="Puiu D."/>
            <person name="Hendricks S."/>
            <person name="Wang Y."/>
            <person name="Chaplin M.D."/>
            <person name="Akan D."/>
            <person name="Paik S."/>
            <person name="Peterson D.L."/>
            <person name="Macrina F.L."/>
            <person name="Buck G.A."/>
        </authorList>
    </citation>
    <scope>NUCLEOTIDE SEQUENCE [LARGE SCALE GENOMIC DNA]</scope>
    <source>
        <strain>SK36</strain>
    </source>
</reference>
<feature type="chain" id="PRO_1000077629" description="NH(3)-dependent NAD(+) synthetase">
    <location>
        <begin position="1"/>
        <end position="274"/>
    </location>
</feature>
<feature type="binding site" evidence="1">
    <location>
        <begin position="46"/>
        <end position="53"/>
    </location>
    <ligand>
        <name>ATP</name>
        <dbReference type="ChEBI" id="CHEBI:30616"/>
    </ligand>
</feature>
<feature type="binding site" evidence="1">
    <location>
        <position position="52"/>
    </location>
    <ligand>
        <name>Mg(2+)</name>
        <dbReference type="ChEBI" id="CHEBI:18420"/>
    </ligand>
</feature>
<feature type="binding site" evidence="1">
    <location>
        <position position="140"/>
    </location>
    <ligand>
        <name>deamido-NAD(+)</name>
        <dbReference type="ChEBI" id="CHEBI:58437"/>
    </ligand>
</feature>
<feature type="binding site" evidence="1">
    <location>
        <position position="160"/>
    </location>
    <ligand>
        <name>ATP</name>
        <dbReference type="ChEBI" id="CHEBI:30616"/>
    </ligand>
</feature>
<feature type="binding site" evidence="1">
    <location>
        <position position="165"/>
    </location>
    <ligand>
        <name>Mg(2+)</name>
        <dbReference type="ChEBI" id="CHEBI:18420"/>
    </ligand>
</feature>
<feature type="binding site" evidence="1">
    <location>
        <position position="173"/>
    </location>
    <ligand>
        <name>deamido-NAD(+)</name>
        <dbReference type="ChEBI" id="CHEBI:58437"/>
    </ligand>
</feature>
<feature type="binding site" evidence="1">
    <location>
        <position position="180"/>
    </location>
    <ligand>
        <name>deamido-NAD(+)</name>
        <dbReference type="ChEBI" id="CHEBI:58437"/>
    </ligand>
</feature>
<feature type="binding site" evidence="1">
    <location>
        <position position="189"/>
    </location>
    <ligand>
        <name>ATP</name>
        <dbReference type="ChEBI" id="CHEBI:30616"/>
    </ligand>
</feature>
<feature type="binding site" evidence="1">
    <location>
        <position position="211"/>
    </location>
    <ligand>
        <name>ATP</name>
        <dbReference type="ChEBI" id="CHEBI:30616"/>
    </ligand>
</feature>
<feature type="binding site" evidence="1">
    <location>
        <begin position="260"/>
        <end position="261"/>
    </location>
    <ligand>
        <name>deamido-NAD(+)</name>
        <dbReference type="ChEBI" id="CHEBI:58437"/>
    </ligand>
</feature>
<protein>
    <recommendedName>
        <fullName evidence="1">NH(3)-dependent NAD(+) synthetase</fullName>
        <ecNumber evidence="1">6.3.1.5</ecNumber>
    </recommendedName>
</protein>
<name>NADE_STRSV</name>
<comment type="function">
    <text evidence="1">Catalyzes the ATP-dependent amidation of deamido-NAD to form NAD. Uses ammonia as a nitrogen source.</text>
</comment>
<comment type="catalytic activity">
    <reaction evidence="1">
        <text>deamido-NAD(+) + NH4(+) + ATP = AMP + diphosphate + NAD(+) + H(+)</text>
        <dbReference type="Rhea" id="RHEA:21188"/>
        <dbReference type="ChEBI" id="CHEBI:15378"/>
        <dbReference type="ChEBI" id="CHEBI:28938"/>
        <dbReference type="ChEBI" id="CHEBI:30616"/>
        <dbReference type="ChEBI" id="CHEBI:33019"/>
        <dbReference type="ChEBI" id="CHEBI:57540"/>
        <dbReference type="ChEBI" id="CHEBI:58437"/>
        <dbReference type="ChEBI" id="CHEBI:456215"/>
        <dbReference type="EC" id="6.3.1.5"/>
    </reaction>
</comment>
<comment type="pathway">
    <text evidence="1">Cofactor biosynthesis; NAD(+) biosynthesis; NAD(+) from deamido-NAD(+) (ammonia route): step 1/1.</text>
</comment>
<comment type="subunit">
    <text evidence="1">Homodimer.</text>
</comment>
<comment type="similarity">
    <text evidence="1">Belongs to the NAD synthetase family.</text>
</comment>
<sequence length="274" mass="30130">MSLQEEIIAQLGVKPIIDPEEEIRKSVDFLKAYLKKHPFLKSYVLGISGGQDSTLAGRLAQLAVEEMRAETGDNSYRFIAVRLPYGVQVDEDDAQKALAFIQADVSLTVNIKESADAMTKAVEATGAKVSDFNKGNIKARSRMIAQYALAGSYSGAVIGTDHAAENVTAFFTKFGDGGADILPLYRLNKRQGKQLLAALGADPALYEKVPTADLEEEKPGIADEVALGVTYNEIDDYLEGKSVSAQAQETIESWWHKGQHKRHFPITVFDEFWR</sequence>